<dbReference type="EMBL" id="AP009371">
    <property type="protein sequence ID" value="BAF50218.1"/>
    <property type="molecule type" value="Genomic_DNA"/>
</dbReference>
<dbReference type="RefSeq" id="YP_001123394.1">
    <property type="nucleotide sequence ID" value="NC_009270.1"/>
</dbReference>
<dbReference type="GeneID" id="4961723"/>
<dbReference type="GO" id="GO:0009507">
    <property type="term" value="C:chloroplast"/>
    <property type="evidence" value="ECO:0007669"/>
    <property type="project" value="UniProtKB-SubCell"/>
</dbReference>
<dbReference type="GO" id="GO:1990904">
    <property type="term" value="C:ribonucleoprotein complex"/>
    <property type="evidence" value="ECO:0007669"/>
    <property type="project" value="UniProtKB-KW"/>
</dbReference>
<dbReference type="GO" id="GO:0005840">
    <property type="term" value="C:ribosome"/>
    <property type="evidence" value="ECO:0007669"/>
    <property type="project" value="UniProtKB-KW"/>
</dbReference>
<dbReference type="GO" id="GO:0003735">
    <property type="term" value="F:structural constituent of ribosome"/>
    <property type="evidence" value="ECO:0007669"/>
    <property type="project" value="InterPro"/>
</dbReference>
<dbReference type="GO" id="GO:0006412">
    <property type="term" value="P:translation"/>
    <property type="evidence" value="ECO:0007669"/>
    <property type="project" value="UniProtKB-UniRule"/>
</dbReference>
<dbReference type="FunFam" id="2.20.28.120:FF:000004">
    <property type="entry name" value="50S ribosomal protein L33, chloroplastic"/>
    <property type="match status" value="1"/>
</dbReference>
<dbReference type="Gene3D" id="2.20.28.120">
    <property type="entry name" value="Ribosomal protein L33"/>
    <property type="match status" value="1"/>
</dbReference>
<dbReference type="HAMAP" id="MF_00294">
    <property type="entry name" value="Ribosomal_bL33"/>
    <property type="match status" value="1"/>
</dbReference>
<dbReference type="InterPro" id="IPR001705">
    <property type="entry name" value="Ribosomal_bL33"/>
</dbReference>
<dbReference type="InterPro" id="IPR018264">
    <property type="entry name" value="Ribosomal_bL33_CS"/>
</dbReference>
<dbReference type="InterPro" id="IPR038584">
    <property type="entry name" value="Ribosomal_bL33_sf"/>
</dbReference>
<dbReference type="InterPro" id="IPR011332">
    <property type="entry name" value="Ribosomal_zn-bd"/>
</dbReference>
<dbReference type="NCBIfam" id="NF001764">
    <property type="entry name" value="PRK00504.1"/>
    <property type="match status" value="1"/>
</dbReference>
<dbReference type="NCBIfam" id="NF001860">
    <property type="entry name" value="PRK00595.1"/>
    <property type="match status" value="1"/>
</dbReference>
<dbReference type="NCBIfam" id="TIGR01023">
    <property type="entry name" value="rpmG_bact"/>
    <property type="match status" value="1"/>
</dbReference>
<dbReference type="PANTHER" id="PTHR43168">
    <property type="entry name" value="50S RIBOSOMAL PROTEIN L33, CHLOROPLASTIC"/>
    <property type="match status" value="1"/>
</dbReference>
<dbReference type="PANTHER" id="PTHR43168:SF2">
    <property type="entry name" value="LARGE RIBOSOMAL SUBUNIT PROTEIN BL33C"/>
    <property type="match status" value="1"/>
</dbReference>
<dbReference type="Pfam" id="PF00471">
    <property type="entry name" value="Ribosomal_L33"/>
    <property type="match status" value="1"/>
</dbReference>
<dbReference type="SUPFAM" id="SSF57829">
    <property type="entry name" value="Zn-binding ribosomal proteins"/>
    <property type="match status" value="1"/>
</dbReference>
<dbReference type="PROSITE" id="PS00582">
    <property type="entry name" value="RIBOSOMAL_L33"/>
    <property type="match status" value="1"/>
</dbReference>
<gene>
    <name evidence="1" type="primary">rpl33</name>
</gene>
<feature type="chain" id="PRO_0000356788" description="Large ribosomal subunit protein bL33c">
    <location>
        <begin position="1"/>
        <end position="66"/>
    </location>
</feature>
<protein>
    <recommendedName>
        <fullName evidence="1">Large ribosomal subunit protein bL33c</fullName>
    </recommendedName>
    <alternativeName>
        <fullName evidence="2">50S ribosomal protein L33, chloroplastic</fullName>
    </alternativeName>
</protein>
<reference key="1">
    <citation type="submission" date="2007-03" db="EMBL/GenBank/DDBJ databases">
        <title>Sequencing analysis of Capsella bursa-pastoris JO22 chloroplast DNA.</title>
        <authorList>
            <person name="Hosouchi T."/>
            <person name="Tsuruoka H."/>
            <person name="Kotani H."/>
        </authorList>
    </citation>
    <scope>NUCLEOTIDE SEQUENCE [LARGE SCALE GENOMIC DNA]</scope>
</reference>
<evidence type="ECO:0000255" key="1">
    <source>
        <dbReference type="HAMAP-Rule" id="MF_00294"/>
    </source>
</evidence>
<evidence type="ECO:0000305" key="2"/>
<keyword id="KW-0150">Chloroplast</keyword>
<keyword id="KW-0934">Plastid</keyword>
<keyword id="KW-0687">Ribonucleoprotein</keyword>
<keyword id="KW-0689">Ribosomal protein</keyword>
<accession>A4QKL3</accession>
<organism>
    <name type="scientific">Capsella bursa-pastoris</name>
    <name type="common">Shepherd's purse</name>
    <name type="synonym">Thlaspi bursa-pastoris</name>
    <dbReference type="NCBI Taxonomy" id="3719"/>
    <lineage>
        <taxon>Eukaryota</taxon>
        <taxon>Viridiplantae</taxon>
        <taxon>Streptophyta</taxon>
        <taxon>Embryophyta</taxon>
        <taxon>Tracheophyta</taxon>
        <taxon>Spermatophyta</taxon>
        <taxon>Magnoliopsida</taxon>
        <taxon>eudicotyledons</taxon>
        <taxon>Gunneridae</taxon>
        <taxon>Pentapetalae</taxon>
        <taxon>rosids</taxon>
        <taxon>malvids</taxon>
        <taxon>Brassicales</taxon>
        <taxon>Brassicaceae</taxon>
        <taxon>Camelineae</taxon>
        <taxon>Capsella</taxon>
    </lineage>
</organism>
<comment type="subcellular location">
    <subcellularLocation>
        <location>Plastid</location>
        <location>Chloroplast</location>
    </subcellularLocation>
</comment>
<comment type="similarity">
    <text evidence="1">Belongs to the bacterial ribosomal protein bL33 family.</text>
</comment>
<geneLocation type="chloroplast"/>
<name>RK33_CAPBU</name>
<sequence length="66" mass="7708">MAKGKDVRVTIILECTSCVRNDIKKESAGISRYITQKNRHNTPSRLELRKFCPYCYKHTIHGEIKK</sequence>
<proteinExistence type="inferred from homology"/>